<protein>
    <recommendedName>
        <fullName evidence="2">IMP-specific 5'-nucleotidase 1</fullName>
        <shortName evidence="2">PfISN1</shortName>
        <ecNumber evidence="1">3.1.3.99</ecNumber>
    </recommendedName>
</protein>
<feature type="chain" id="PRO_0000456895" description="IMP-specific 5'-nucleotidase 1">
    <location>
        <begin position="1"/>
        <end position="444"/>
    </location>
</feature>
<feature type="active site" description="Nucleophile" evidence="4">
    <location>
        <position position="170"/>
    </location>
</feature>
<feature type="active site" description="Proton donor" evidence="4">
    <location>
        <position position="172"/>
    </location>
</feature>
<feature type="binding site" evidence="1 7">
    <location>
        <position position="132"/>
    </location>
    <ligand>
        <name>ATP</name>
        <dbReference type="ChEBI" id="CHEBI:30616"/>
        <note>allosteric activator</note>
    </ligand>
</feature>
<feature type="binding site" evidence="1 7">
    <location>
        <position position="150"/>
    </location>
    <ligand>
        <name>ATP</name>
        <dbReference type="ChEBI" id="CHEBI:30616"/>
        <note>allosteric activator</note>
    </ligand>
</feature>
<feature type="binding site" evidence="1 8 10">
    <location>
        <position position="170"/>
    </location>
    <ligand>
        <name>IMP</name>
        <dbReference type="ChEBI" id="CHEBI:58053"/>
    </ligand>
</feature>
<feature type="binding site" evidence="1 8 10">
    <location>
        <position position="170"/>
    </location>
    <ligand>
        <name>Mg(2+)</name>
        <dbReference type="ChEBI" id="CHEBI:18420"/>
    </ligand>
</feature>
<feature type="binding site" evidence="1 8 10">
    <location>
        <position position="172"/>
    </location>
    <ligand>
        <name>IMP</name>
        <dbReference type="ChEBI" id="CHEBI:58053"/>
    </ligand>
</feature>
<feature type="binding site" evidence="1 8 10">
    <location>
        <position position="172"/>
    </location>
    <ligand>
        <name>Mg(2+)</name>
        <dbReference type="ChEBI" id="CHEBI:18420"/>
    </ligand>
</feature>
<feature type="binding site" evidence="1 8 10">
    <location>
        <position position="178"/>
    </location>
    <ligand>
        <name>IMP</name>
        <dbReference type="ChEBI" id="CHEBI:58053"/>
    </ligand>
</feature>
<feature type="binding site" evidence="1 8 10">
    <location>
        <position position="204"/>
    </location>
    <ligand>
        <name>IMP</name>
        <dbReference type="ChEBI" id="CHEBI:58053"/>
    </ligand>
</feature>
<feature type="binding site" evidence="1 8 10">
    <location>
        <position position="207"/>
    </location>
    <ligand>
        <name>IMP</name>
        <dbReference type="ChEBI" id="CHEBI:58053"/>
    </ligand>
</feature>
<feature type="binding site" evidence="1 8 10">
    <location>
        <position position="308"/>
    </location>
    <ligand>
        <name>IMP</name>
        <dbReference type="ChEBI" id="CHEBI:58053"/>
    </ligand>
</feature>
<feature type="binding site" evidence="1 8 10">
    <location>
        <position position="363"/>
    </location>
    <ligand>
        <name>IMP</name>
        <dbReference type="ChEBI" id="CHEBI:58053"/>
    </ligand>
</feature>
<feature type="binding site" evidence="1 8 10">
    <location>
        <position position="371"/>
    </location>
    <ligand>
        <name>IMP</name>
        <dbReference type="ChEBI" id="CHEBI:58053"/>
    </ligand>
</feature>
<feature type="binding site" evidence="1 8 10">
    <location>
        <position position="394"/>
    </location>
    <ligand>
        <name>Mg(2+)</name>
        <dbReference type="ChEBI" id="CHEBI:18420"/>
    </ligand>
</feature>
<feature type="mutagenesis site" description="Loss of catalytic activity." evidence="1">
    <location>
        <begin position="2"/>
        <end position="59"/>
    </location>
</feature>
<feature type="mutagenesis site" description="8-fold reduction in affinity for IMP and 1.5-fold reduction in catalytic efficiency at pH 5. 2.2-fold reduction in affinity for IMP and 4.5-fold increase in catalytic efficiency at pH 8." evidence="1">
    <location>
        <begin position="2"/>
        <end position="30"/>
    </location>
</feature>
<feature type="mutagenesis site" description="9.4-fold reduction in affinity for IMP and 4-fold decrease in catalytic efficiency at pH 5. 4-fold increase in affinity for IMP and 4.4-fold increase in catalytic efficiency at pH 8." evidence="1">
    <original>K</original>
    <variation>L</variation>
    <location>
        <position position="41"/>
    </location>
</feature>
<feature type="mutagenesis site" description="Increases catalytic activity especially at pH 5." evidence="1">
    <original>H</original>
    <variation>V</variation>
    <location>
        <position position="150"/>
    </location>
</feature>
<feature type="mutagenesis site" description="Loss of catalytic activity towards IMP." evidence="1">
    <original>D</original>
    <variation>N</variation>
    <location>
        <position position="170"/>
    </location>
</feature>
<feature type="mutagenesis site" description="Loss of catalytic activity towards IMP. 1.2-fold increase in affinity for pNPP and 8.6-fold increase in catalytic efficiency at pH 8." evidence="1">
    <original>D</original>
    <variation>A</variation>
    <location>
        <position position="172"/>
    </location>
</feature>
<feature type="mutagenesis site" description="Loss of catalytic activity towards IMP. 3.9-fold increase in affinity for pNPP and 422-fold decrease in catalytic efficiency at pH 8." evidence="1">
    <original>D</original>
    <variation>N</variation>
    <location>
        <position position="172"/>
    </location>
</feature>
<feature type="mutagenesis site" description="Severe loss of catalytic activity." evidence="1">
    <original>Y</original>
    <variation>L</variation>
    <location>
        <position position="176"/>
    </location>
</feature>
<feature type="mutagenesis site" description="Partial loss of catalytic activity." evidence="1">
    <original>D</original>
    <variation>V</variation>
    <location>
        <position position="178"/>
    </location>
</feature>
<feature type="mutagenesis site" description="Loss of catalytic activity." evidence="1">
    <original>R</original>
    <variation>L</variation>
    <location>
        <position position="218"/>
    </location>
</feature>
<feature type="mutagenesis site" description="Loss of catalytic activity." evidence="1">
    <original>D</original>
    <variation>V</variation>
    <location>
        <position position="363"/>
    </location>
</feature>
<feature type="mutagenesis site" description="Loss of catalytic activity in presence of ATP." evidence="1">
    <original>W</original>
    <variation>Y</variation>
    <variation>F</variation>
    <location>
        <position position="365"/>
    </location>
</feature>
<feature type="mutagenesis site" description="Loss of catalytic activity." evidence="1">
    <original>D</original>
    <variation>V</variation>
    <location>
        <position position="367"/>
    </location>
</feature>
<feature type="mutagenesis site" description="Loss of catalytic activity." evidence="1">
    <original>D</original>
    <variation>V</variation>
    <location>
        <position position="394"/>
    </location>
</feature>
<feature type="mutagenesis site" description="Loss of catalytic activity." evidence="1">
    <original>Q</original>
    <variation>L</variation>
    <location>
        <position position="395"/>
    </location>
</feature>
<feature type="mutagenesis site" description="Loss of catalytic activity." evidence="1">
    <original>F</original>
    <variation>L</variation>
    <location>
        <position position="396"/>
    </location>
</feature>
<feature type="mutagenesis site" description="4.7-fold reduction in affinity for IMP and 1.4-fold decrease in catalytic efficiency at pH 5. 6-fold increase in affinity for IMP and 7-fold increase in catalytic efficiency at pH 8. Increases catalytic activity in presence of ATP." evidence="1">
    <original>H</original>
    <variation>V</variation>
    <location>
        <position position="398"/>
    </location>
</feature>
<feature type="mutagenesis site" description="Loss of catalytic activity." evidence="1">
    <original>D</original>
    <variation>V</variation>
    <location>
        <position position="402"/>
    </location>
</feature>
<feature type="mutagenesis site" description="Partial loss of catalytic activity." evidence="1">
    <original>F</original>
    <variation>A</variation>
    <location>
        <position position="403"/>
    </location>
</feature>
<feature type="mutagenesis site" description="Reduces catalytic activity in presence of ATP." evidence="1">
    <original>F</original>
    <variation>L</variation>
    <location>
        <position position="403"/>
    </location>
</feature>
<feature type="mutagenesis site" description="Increases catalytic activity." evidence="1">
    <original>F</original>
    <variation>Y</variation>
    <location>
        <position position="403"/>
    </location>
</feature>
<feature type="mutagenesis site" description="Severe loss of catalytic activity." evidence="1">
    <original>R</original>
    <variation>L</variation>
    <location>
        <position position="406"/>
    </location>
</feature>
<feature type="mutagenesis site" description="Loss of catalytic activity." evidence="1">
    <original>W</original>
    <variation>L</variation>
    <location>
        <position position="413"/>
    </location>
</feature>
<feature type="mutagenesis site" description="4.7-fold reduction in affinity for IMP and 1.1-fold increase in catalytic efficiency at pH 5. 3-fold increase in affinity for IMP and 8-fold increase in catalytic efficiency at pH 8." evidence="1">
    <location>
        <begin position="435"/>
        <end position="444"/>
    </location>
</feature>
<feature type="turn" evidence="15">
    <location>
        <begin position="12"/>
        <end position="14"/>
    </location>
</feature>
<feature type="turn" evidence="15">
    <location>
        <begin position="33"/>
        <end position="35"/>
    </location>
</feature>
<feature type="helix" evidence="15">
    <location>
        <begin position="39"/>
        <end position="47"/>
    </location>
</feature>
<feature type="helix" evidence="15">
    <location>
        <begin position="53"/>
        <end position="59"/>
    </location>
</feature>
<feature type="helix" evidence="15">
    <location>
        <begin position="61"/>
        <end position="75"/>
    </location>
</feature>
<feature type="strand" evidence="14">
    <location>
        <begin position="79"/>
        <end position="81"/>
    </location>
</feature>
<feature type="helix" evidence="15">
    <location>
        <begin position="84"/>
        <end position="99"/>
    </location>
</feature>
<feature type="strand" evidence="15">
    <location>
        <begin position="101"/>
        <end position="103"/>
    </location>
</feature>
<feature type="helix" evidence="15">
    <location>
        <begin position="105"/>
        <end position="109"/>
    </location>
</feature>
<feature type="strand" evidence="14">
    <location>
        <begin position="110"/>
        <end position="112"/>
    </location>
</feature>
<feature type="helix" evidence="15">
    <location>
        <begin position="122"/>
        <end position="133"/>
    </location>
</feature>
<feature type="helix" evidence="15">
    <location>
        <begin position="135"/>
        <end position="137"/>
    </location>
</feature>
<feature type="strand" evidence="14">
    <location>
        <begin position="139"/>
        <end position="141"/>
    </location>
</feature>
<feature type="helix" evidence="15">
    <location>
        <begin position="147"/>
        <end position="158"/>
    </location>
</feature>
<feature type="turn" evidence="13">
    <location>
        <begin position="159"/>
        <end position="162"/>
    </location>
</feature>
<feature type="strand" evidence="15">
    <location>
        <begin position="165"/>
        <end position="170"/>
    </location>
</feature>
<feature type="helix" evidence="15">
    <location>
        <begin position="171"/>
        <end position="174"/>
    </location>
</feature>
<feature type="helix" evidence="13">
    <location>
        <begin position="177"/>
        <end position="179"/>
    </location>
</feature>
<feature type="helix" evidence="15">
    <location>
        <begin position="185"/>
        <end position="195"/>
    </location>
</feature>
<feature type="strand" evidence="15">
    <location>
        <begin position="199"/>
        <end position="203"/>
    </location>
</feature>
<feature type="helix" evidence="15">
    <location>
        <begin position="212"/>
        <end position="218"/>
    </location>
</feature>
<feature type="helix" evidence="15">
    <location>
        <begin position="220"/>
        <end position="229"/>
    </location>
</feature>
<feature type="turn" evidence="15">
    <location>
        <begin position="231"/>
        <end position="234"/>
    </location>
</feature>
<feature type="helix" evidence="15">
    <location>
        <begin position="235"/>
        <end position="238"/>
    </location>
</feature>
<feature type="strand" evidence="15">
    <location>
        <begin position="239"/>
        <end position="243"/>
    </location>
</feature>
<feature type="turn" evidence="15">
    <location>
        <begin position="244"/>
        <end position="247"/>
    </location>
</feature>
<feature type="strand" evidence="15">
    <location>
        <begin position="248"/>
        <end position="252"/>
    </location>
</feature>
<feature type="strand" evidence="16">
    <location>
        <begin position="254"/>
        <end position="256"/>
    </location>
</feature>
<feature type="strand" evidence="15">
    <location>
        <begin position="258"/>
        <end position="260"/>
    </location>
</feature>
<feature type="helix" evidence="15">
    <location>
        <begin position="263"/>
        <end position="266"/>
    </location>
</feature>
<feature type="helix" evidence="15">
    <location>
        <begin position="267"/>
        <end position="269"/>
    </location>
</feature>
<feature type="helix" evidence="15">
    <location>
        <begin position="278"/>
        <end position="296"/>
    </location>
</feature>
<feature type="strand" evidence="15">
    <location>
        <begin position="300"/>
        <end position="304"/>
    </location>
</feature>
<feature type="strand" evidence="15">
    <location>
        <begin position="306"/>
        <end position="313"/>
    </location>
</feature>
<feature type="turn" evidence="15">
    <location>
        <begin position="320"/>
        <end position="322"/>
    </location>
</feature>
<feature type="helix" evidence="15">
    <location>
        <begin position="332"/>
        <end position="348"/>
    </location>
</feature>
<feature type="strand" evidence="15">
    <location>
        <begin position="356"/>
        <end position="358"/>
    </location>
</feature>
<feature type="strand" evidence="15">
    <location>
        <begin position="361"/>
        <end position="368"/>
    </location>
</feature>
<feature type="helix" evidence="15">
    <location>
        <begin position="371"/>
        <end position="382"/>
    </location>
</feature>
<feature type="helix" evidence="15">
    <location>
        <begin position="386"/>
        <end position="388"/>
    </location>
</feature>
<feature type="strand" evidence="15">
    <location>
        <begin position="389"/>
        <end position="393"/>
    </location>
</feature>
<feature type="helix" evidence="15">
    <location>
        <begin position="395"/>
        <end position="397"/>
    </location>
</feature>
<feature type="turn" evidence="15">
    <location>
        <begin position="400"/>
        <end position="402"/>
    </location>
</feature>
<feature type="strand" evidence="15">
    <location>
        <begin position="407"/>
        <end position="413"/>
    </location>
</feature>
<feature type="helix" evidence="15">
    <location>
        <begin position="417"/>
        <end position="428"/>
    </location>
</feature>
<feature type="turn" evidence="13">
    <location>
        <begin position="429"/>
        <end position="431"/>
    </location>
</feature>
<proteinExistence type="evidence at protein level"/>
<keyword id="KW-0002">3D-structure</keyword>
<keyword id="KW-0021">Allosteric enzyme</keyword>
<keyword id="KW-0067">ATP-binding</keyword>
<keyword id="KW-0963">Cytoplasm</keyword>
<keyword id="KW-0378">Hydrolase</keyword>
<keyword id="KW-0460">Magnesium</keyword>
<keyword id="KW-0479">Metal-binding</keyword>
<keyword id="KW-0546">Nucleotide metabolism</keyword>
<keyword id="KW-0547">Nucleotide-binding</keyword>
<keyword id="KW-1185">Reference proteome</keyword>
<organism evidence="6">
    <name type="scientific">Plasmodium falciparum (isolate 3D7)</name>
    <dbReference type="NCBI Taxonomy" id="36329"/>
    <lineage>
        <taxon>Eukaryota</taxon>
        <taxon>Sar</taxon>
        <taxon>Alveolata</taxon>
        <taxon>Apicomplexa</taxon>
        <taxon>Aconoidasida</taxon>
        <taxon>Haemosporida</taxon>
        <taxon>Plasmodiidae</taxon>
        <taxon>Plasmodium</taxon>
        <taxon>Plasmodium (Laverania)</taxon>
    </lineage>
</organism>
<dbReference type="EC" id="3.1.3.99" evidence="1"/>
<dbReference type="EMBL" id="LN999947">
    <property type="protein sequence ID" value="CZT99223.1"/>
    <property type="molecule type" value="Genomic_DNA"/>
</dbReference>
<dbReference type="PDB" id="6RMD">
    <property type="method" value="X-ray"/>
    <property type="resolution" value="2.80 A"/>
    <property type="chains" value="A=10-444, D=59-430"/>
</dbReference>
<dbReference type="PDB" id="6RME">
    <property type="method" value="X-ray"/>
    <property type="resolution" value="3.40 A"/>
    <property type="chains" value="A/G=47-430, B/D=46-430, C=38-431, E/H=46-431, F=45-431"/>
</dbReference>
<dbReference type="PDB" id="6RMO">
    <property type="method" value="X-ray"/>
    <property type="resolution" value="2.60 A"/>
    <property type="chains" value="A/B/C/D/E/F/G/H/I/J/K/L/M/N/O/P=1-444"/>
</dbReference>
<dbReference type="PDB" id="6RMW">
    <property type="method" value="X-ray"/>
    <property type="resolution" value="3.50 A"/>
    <property type="chains" value="A/B/C/D/E/F/G/H=31-444"/>
</dbReference>
<dbReference type="PDB" id="6RN1">
    <property type="method" value="X-ray"/>
    <property type="resolution" value="3.00 A"/>
    <property type="chains" value="A/B=60-444"/>
</dbReference>
<dbReference type="PDB" id="6RNH">
    <property type="method" value="X-ray"/>
    <property type="resolution" value="3.70 A"/>
    <property type="chains" value="A/B=1-431"/>
</dbReference>
<dbReference type="PDBsum" id="6RMD"/>
<dbReference type="PDBsum" id="6RME"/>
<dbReference type="PDBsum" id="6RMO"/>
<dbReference type="PDBsum" id="6RMW"/>
<dbReference type="PDBsum" id="6RN1"/>
<dbReference type="PDBsum" id="6RNH"/>
<dbReference type="SMR" id="A0A144A134"/>
<dbReference type="FunCoup" id="A0A144A134">
    <property type="interactions" value="41"/>
</dbReference>
<dbReference type="STRING" id="36329.A0A144A134"/>
<dbReference type="PaxDb" id="5833-PFL0305c"/>
<dbReference type="EnsemblProtists" id="CZT99223">
    <property type="protein sequence ID" value="CZT99223"/>
    <property type="gene ID" value="PF3D7_1206100"/>
</dbReference>
<dbReference type="VEuPathDB" id="PlasmoDB:PF3D7_1206100"/>
<dbReference type="InParanoid" id="A0A144A134"/>
<dbReference type="OMA" id="WGVLACQ"/>
<dbReference type="OrthoDB" id="185373at2759"/>
<dbReference type="PhylomeDB" id="A0A144A134"/>
<dbReference type="Proteomes" id="UP000001450">
    <property type="component" value="Chromosome 12"/>
</dbReference>
<dbReference type="GO" id="GO:0005737">
    <property type="term" value="C:cytoplasm"/>
    <property type="evidence" value="ECO:0000314"/>
    <property type="project" value="UniProtKB"/>
</dbReference>
<dbReference type="GO" id="GO:0005524">
    <property type="term" value="F:ATP binding"/>
    <property type="evidence" value="ECO:0000314"/>
    <property type="project" value="UniProtKB"/>
</dbReference>
<dbReference type="GO" id="GO:0050483">
    <property type="term" value="F:IMP 5'-nucleotidase activity"/>
    <property type="evidence" value="ECO:0000314"/>
    <property type="project" value="UniProtKB"/>
</dbReference>
<dbReference type="GO" id="GO:0000287">
    <property type="term" value="F:magnesium ion binding"/>
    <property type="evidence" value="ECO:0000314"/>
    <property type="project" value="UniProtKB"/>
</dbReference>
<dbReference type="GO" id="GO:0006204">
    <property type="term" value="P:IMP catabolic process"/>
    <property type="evidence" value="ECO:0000314"/>
    <property type="project" value="UniProtKB"/>
</dbReference>
<dbReference type="GO" id="GO:0006190">
    <property type="term" value="P:inosine salvage"/>
    <property type="evidence" value="ECO:0000318"/>
    <property type="project" value="GO_Central"/>
</dbReference>
<dbReference type="GO" id="GO:0071590">
    <property type="term" value="P:nicotinamide riboside biosynthetic process"/>
    <property type="evidence" value="ECO:0000318"/>
    <property type="project" value="GO_Central"/>
</dbReference>
<dbReference type="GO" id="GO:0071592">
    <property type="term" value="P:nicotinic acid riboside biosynthetic process"/>
    <property type="evidence" value="ECO:0000318"/>
    <property type="project" value="GO_Central"/>
</dbReference>
<dbReference type="Gene3D" id="3.40.50.1000">
    <property type="entry name" value="HAD superfamily/HAD-like"/>
    <property type="match status" value="1"/>
</dbReference>
<dbReference type="InterPro" id="IPR036412">
    <property type="entry name" value="HAD-like_sf"/>
</dbReference>
<dbReference type="InterPro" id="IPR023214">
    <property type="entry name" value="HAD_sf"/>
</dbReference>
<dbReference type="InterPro" id="IPR009453">
    <property type="entry name" value="ISN1"/>
</dbReference>
<dbReference type="PANTHER" id="PTHR28213">
    <property type="entry name" value="IMP-SPECIFIC 5'-NUCLEOTIDASE 1"/>
    <property type="match status" value="1"/>
</dbReference>
<dbReference type="PANTHER" id="PTHR28213:SF1">
    <property type="entry name" value="IMP-SPECIFIC 5'-NUCLEOTIDASE 1"/>
    <property type="match status" value="1"/>
</dbReference>
<dbReference type="Pfam" id="PF06437">
    <property type="entry name" value="ISN1"/>
    <property type="match status" value="1"/>
</dbReference>
<dbReference type="PIRSF" id="PIRSF028836">
    <property type="entry name" value="ISN1"/>
    <property type="match status" value="1"/>
</dbReference>
<dbReference type="SUPFAM" id="SSF56784">
    <property type="entry name" value="HAD-like"/>
    <property type="match status" value="1"/>
</dbReference>
<gene>
    <name evidence="2" type="primary">ISN1</name>
    <name evidence="5" type="ORF">PF3D7_1206100</name>
</gene>
<comment type="function">
    <text evidence="1">Specifically, catalyzes the dephosphorylation of inosine monophosphate (IMP) into inosine (PubMed:32591529). By dephosphorylating IMP, plays a role in the purine salvage pathway (PubMed:32591529). Does not have phosphotransferase activity with IMP as phosphate donor and adenosine as phosphate acceptor (PubMed:32591529).</text>
</comment>
<comment type="catalytic activity">
    <reaction evidence="1">
        <text>IMP + H2O = inosine + phosphate</text>
        <dbReference type="Rhea" id="RHEA:27718"/>
        <dbReference type="ChEBI" id="CHEBI:15377"/>
        <dbReference type="ChEBI" id="CHEBI:17596"/>
        <dbReference type="ChEBI" id="CHEBI:43474"/>
        <dbReference type="ChEBI" id="CHEBI:58053"/>
        <dbReference type="EC" id="3.1.3.99"/>
    </reaction>
</comment>
<comment type="cofactor">
    <cofactor evidence="1">
        <name>Mg(2+)</name>
        <dbReference type="ChEBI" id="CHEBI:18420"/>
    </cofactor>
</comment>
<comment type="activity regulation">
    <text evidence="1">At physiological pH, allosterically activated by ATP (PubMed:32591529). ATP binding is a prerequisite to magnesium and substrate binding (PubMed:32591529). ATP binds to 2 of the subunits in the homotetramer inducing a closure of these 2 subunits and the release of the C-terminal loop, thereby activating the enzyme (PubMed:32591529). In this conformation, the enzyme can bind IMP and magnesium which ultimately leads to the release of ATP (PubMed:32591529). At pH 5, ATP does not have an allosteric role and is dispensable for magnesium and substrate binding (PubMed:32591529). Inhibited by phosphocholine and D-myo-inositol-4-phosphate (PubMed:32591529).</text>
</comment>
<comment type="biophysicochemical properties">
    <kinetics>
        <KM evidence="1">0.34 mM for IMP (at pH 5, 25 degrees Celsius and in the absence of ATP)</KM>
        <KM evidence="1">66 mM for IMP (at pH 8, 25 degrees Celsius and in the absence of ATP)</KM>
        <KM evidence="1">6.8 mM for IMP (at pH 8, 25 degrees Celsius and in the presence of ATP)</KM>
        <KM evidence="1">105.5 mM for AMP (at pH 5, 25 degrees Celsius and in the absence of ATP)</KM>
        <KM evidence="1">72.2 mM for AMP (at pH 8, 25 degrees Celsius and in the absence of ATP)</KM>
        <KM evidence="1">71.7 mM for AMP (at pH 8, 25 degrees Celsius and in presence of ATP)</KM>
        <text evidence="1">kcat is 10.3 sec(-1) with IMP as substrate (at pH 5, 25 degrees Celsius and in the absence of ATP) (PubMed:32591529). kcat is 13.5 sec(-1) with IMP as substrate (at pH 8, 25 degrees Celsius and in the absence of ATP) (PubMed:32591529). kcat is 21 sec(-1) with IMP as substrate (at pH 8, 25 degrees Celsius and in the presence of ATP) (PubMed:32591529). kcat is 23.2 sec(-1) with AMP as substrate (at pH 5, 25 degrees Celsius and in the absence of ATP) (PubMed:32591529). kcat is 12.5 sec(-1) with AMP as substrate (at pH 8, 25 degrees Celsius and in the absence of ATP) (PubMed:32591529). kcat is 19.4 sec(-1) with AMP as substrate (at pH 8, 25 degrees Celsius and in the presence of ATP) (PubMed:32591529).</text>
    </kinetics>
    <phDependence>
        <text evidence="1">Optimum pH is 4-5.</text>
    </phDependence>
</comment>
<comment type="subunit">
    <text evidence="1">Homotetramer.</text>
</comment>
<comment type="subcellular location">
    <subcellularLocation>
        <location evidence="1">Cytoplasm</location>
    </subcellularLocation>
</comment>
<comment type="developmental stage">
    <text evidence="1">Expressed during the asexual blood stage, including in rings, trophozoites and schizonts (at protein level) (PubMed:32591529). Expressed in gametocytes (at protein level) (PubMed:32591529).</text>
</comment>
<comment type="similarity">
    <text evidence="3">Belongs to the ISN1 family.</text>
</comment>
<accession>A0A144A134</accession>
<evidence type="ECO:0000269" key="1">
    <source>
    </source>
</evidence>
<evidence type="ECO:0000303" key="2">
    <source>
    </source>
</evidence>
<evidence type="ECO:0000305" key="3"/>
<evidence type="ECO:0000305" key="4">
    <source>
    </source>
</evidence>
<evidence type="ECO:0000312" key="5">
    <source>
        <dbReference type="EMBL" id="CZT99223.1"/>
    </source>
</evidence>
<evidence type="ECO:0000312" key="6">
    <source>
        <dbReference type="Proteomes" id="UP000001450"/>
    </source>
</evidence>
<evidence type="ECO:0007744" key="7">
    <source>
        <dbReference type="PDB" id="6RMD"/>
    </source>
</evidence>
<evidence type="ECO:0007744" key="8">
    <source>
        <dbReference type="PDB" id="6RME"/>
    </source>
</evidence>
<evidence type="ECO:0007744" key="9">
    <source>
        <dbReference type="PDB" id="6RMO"/>
    </source>
</evidence>
<evidence type="ECO:0007744" key="10">
    <source>
        <dbReference type="PDB" id="6RMW"/>
    </source>
</evidence>
<evidence type="ECO:0007744" key="11">
    <source>
        <dbReference type="PDB" id="6RN1"/>
    </source>
</evidence>
<evidence type="ECO:0007744" key="12">
    <source>
        <dbReference type="PDB" id="6RNH"/>
    </source>
</evidence>
<evidence type="ECO:0007829" key="13">
    <source>
        <dbReference type="PDB" id="6RMD"/>
    </source>
</evidence>
<evidence type="ECO:0007829" key="14">
    <source>
        <dbReference type="PDB" id="6RME"/>
    </source>
</evidence>
<evidence type="ECO:0007829" key="15">
    <source>
        <dbReference type="PDB" id="6RMO"/>
    </source>
</evidence>
<evidence type="ECO:0007829" key="16">
    <source>
        <dbReference type="PDB" id="6RMW"/>
    </source>
</evidence>
<reference evidence="6" key="1">
    <citation type="journal article" date="2002" name="Nature">
        <title>Genome sequence of the human malaria parasite Plasmodium falciparum.</title>
        <authorList>
            <person name="Gardner M.J."/>
            <person name="Hall N."/>
            <person name="Fung E."/>
            <person name="White O."/>
            <person name="Berriman M."/>
            <person name="Hyman R.W."/>
            <person name="Carlton J.M."/>
            <person name="Pain A."/>
            <person name="Nelson K.E."/>
            <person name="Bowman S."/>
            <person name="Paulsen I.T."/>
            <person name="James K.D."/>
            <person name="Eisen J.A."/>
            <person name="Rutherford K.M."/>
            <person name="Salzberg S.L."/>
            <person name="Craig A."/>
            <person name="Kyes S."/>
            <person name="Chan M.-S."/>
            <person name="Nene V."/>
            <person name="Shallom S.J."/>
            <person name="Suh B."/>
            <person name="Peterson J."/>
            <person name="Angiuoli S."/>
            <person name="Pertea M."/>
            <person name="Allen J."/>
            <person name="Selengut J."/>
            <person name="Haft D."/>
            <person name="Mather M.W."/>
            <person name="Vaidya A.B."/>
            <person name="Martin D.M.A."/>
            <person name="Fairlamb A.H."/>
            <person name="Fraunholz M.J."/>
            <person name="Roos D.S."/>
            <person name="Ralph S.A."/>
            <person name="McFadden G.I."/>
            <person name="Cummings L.M."/>
            <person name="Subramanian G.M."/>
            <person name="Mungall C."/>
            <person name="Venter J.C."/>
            <person name="Carucci D.J."/>
            <person name="Hoffman S.L."/>
            <person name="Newbold C."/>
            <person name="Davis R.W."/>
            <person name="Fraser C.M."/>
            <person name="Barrell B.G."/>
        </authorList>
    </citation>
    <scope>NUCLEOTIDE SEQUENCE [LARGE SCALE GENOMIC DNA]</scope>
    <source>
        <strain evidence="6">3D7</strain>
    </source>
</reference>
<reference evidence="7 8 9 10 11 12" key="2">
    <citation type="journal article" date="2020" name="Nat. Commun.">
        <title>Structure and catalytic regulation of Plasmodium falciparum IMP specific nucleotidase.</title>
        <authorList>
            <person name="Carrique L."/>
            <person name="Ballut L."/>
            <person name="Shukla A."/>
            <person name="Varma N."/>
            <person name="Ravi R."/>
            <person name="Violot S."/>
            <person name="Srinivasan B."/>
            <person name="Ganeshappa U.T."/>
            <person name="Kulkarni S."/>
            <person name="Balaram H."/>
            <person name="Aghajari N."/>
        </authorList>
    </citation>
    <scope>X-RAY CRYSTALLOGRAPHY (2.60 ANGSTROMS) OF APO FORM AND OF MUTANT ASN-172 AND IN COMPLEX WITH ATP; IMP AND MAGNESIUM</scope>
    <scope>FUNCTION</scope>
    <scope>CATALYTIC ACTIVITY</scope>
    <scope>COFACTOR</scope>
    <scope>ACTIVITY REGULATION</scope>
    <scope>BIOPHYSICOCHEMICAL PROPERTIES</scope>
    <scope>SUBUNIT</scope>
    <scope>SUBCELLULAR LOCATION</scope>
    <scope>DEVELOPMENTAL STAGE</scope>
    <scope>ACTIVE SITE</scope>
    <scope>MUTAGENESIS OF 2-LYS--LEU-30; 2-LYS--LYS-59; LYS-41; HIS-150; ASP-170; ASP-172; TYR-176; ASP-178; ARG-218; ASP-363; TRP-365; ASP-367; ASP-394; GLN-395; PHE-396; HIS-398; ASP-402; PHE-403; ARG-406; TRP-413 AND 435-PHE--GLN-444</scope>
</reference>
<name>ISN1_PLAF7</name>
<sequence length="444" mass="51907">MKNLDINTFDNIEDIPLGSSEQDPYDFFTLSDRNVMNSDMKKNIVQWNSRYSYNQLKNKDSLIMFLVEIFRSLFVSNCIDKNIDNVLLSIEEMFIDHYYNPQHSRLKYLIDDVGIFFTKLPITKAFHTYNKKYRITKRLYAPPTFNEVRHILNLAQILSLEEGLDLLTFDADETLYPDGHDFNDEVLASYISCLLKKMNIAIVTAASYNNDAEKYQKRLENLLKYFSKHNIKDGSYKNFYVMGGESNYLFKCNEEATLYSVPENEWRHYKKFVDYDTVQEILNISEKCLEKVIKDFGLCAQIQRKEKSIGLVPNKIPSLNIKNEQKNYMIKYEVLEEAVIRIKKEIIKNKITAPYCAFNGGQDLWVDVGNKAEGLLILQKLLKIQKKKCCHIGDQFLHSGNDFPTRFCSLTLWVSNPQETKACLKSIMHLNIKSFIPEVLYENQ</sequence>